<keyword id="KW-0093">Biotin biosynthesis</keyword>
<keyword id="KW-0963">Cytoplasm</keyword>
<keyword id="KW-0378">Hydrolase</keyword>
<keyword id="KW-0719">Serine esterase</keyword>
<proteinExistence type="inferred from homology"/>
<feature type="chain" id="PRO_0000204478" description="Pimeloyl-[acyl-carrier protein] methyl ester esterase">
    <location>
        <begin position="1"/>
        <end position="239"/>
    </location>
</feature>
<feature type="active site" description="Nucleophile" evidence="1">
    <location>
        <position position="77"/>
    </location>
</feature>
<feature type="active site" evidence="1">
    <location>
        <position position="192"/>
    </location>
</feature>
<feature type="active site" evidence="1">
    <location>
        <position position="220"/>
    </location>
</feature>
<feature type="binding site" evidence="1">
    <location>
        <position position="20"/>
    </location>
    <ligand>
        <name>substrate</name>
    </ligand>
</feature>
<feature type="binding site" evidence="1">
    <location>
        <begin position="77"/>
        <end position="78"/>
    </location>
    <ligand>
        <name>substrate</name>
    </ligand>
</feature>
<feature type="binding site" evidence="1">
    <location>
        <begin position="138"/>
        <end position="142"/>
    </location>
    <ligand>
        <name>substrate</name>
    </ligand>
</feature>
<feature type="binding site" evidence="1">
    <location>
        <position position="220"/>
    </location>
    <ligand>
        <name>substrate</name>
    </ligand>
</feature>
<name>BIOH_LEGPA</name>
<evidence type="ECO:0000255" key="1">
    <source>
        <dbReference type="HAMAP-Rule" id="MF_01260"/>
    </source>
</evidence>
<accession>Q5X590</accession>
<dbReference type="EC" id="3.1.1.85" evidence="1"/>
<dbReference type="EMBL" id="CR628336">
    <property type="protein sequence ID" value="CAH12581.1"/>
    <property type="molecule type" value="Genomic_DNA"/>
</dbReference>
<dbReference type="RefSeq" id="WP_011213758.1">
    <property type="nucleotide sequence ID" value="NC_006368.1"/>
</dbReference>
<dbReference type="SMR" id="Q5X590"/>
<dbReference type="ESTHER" id="legpa-q5x590">
    <property type="family name" value="BioH"/>
</dbReference>
<dbReference type="KEGG" id="lpp:lpp1430"/>
<dbReference type="LegioList" id="lpp1430"/>
<dbReference type="HOGENOM" id="CLU_020336_12_2_6"/>
<dbReference type="UniPathway" id="UPA00078"/>
<dbReference type="GO" id="GO:0005737">
    <property type="term" value="C:cytoplasm"/>
    <property type="evidence" value="ECO:0007669"/>
    <property type="project" value="UniProtKB-SubCell"/>
</dbReference>
<dbReference type="GO" id="GO:0016020">
    <property type="term" value="C:membrane"/>
    <property type="evidence" value="ECO:0007669"/>
    <property type="project" value="TreeGrafter"/>
</dbReference>
<dbReference type="GO" id="GO:0090499">
    <property type="term" value="F:pimelyl-[acyl-carrier protein] methyl ester esterase activity"/>
    <property type="evidence" value="ECO:0007669"/>
    <property type="project" value="UniProtKB-EC"/>
</dbReference>
<dbReference type="GO" id="GO:0009102">
    <property type="term" value="P:biotin biosynthetic process"/>
    <property type="evidence" value="ECO:0007669"/>
    <property type="project" value="UniProtKB-UniRule"/>
</dbReference>
<dbReference type="Gene3D" id="3.40.50.1820">
    <property type="entry name" value="alpha/beta hydrolase"/>
    <property type="match status" value="1"/>
</dbReference>
<dbReference type="HAMAP" id="MF_01260">
    <property type="entry name" value="Carboxylester"/>
    <property type="match status" value="1"/>
</dbReference>
<dbReference type="InterPro" id="IPR000073">
    <property type="entry name" value="AB_hydrolase_1"/>
</dbReference>
<dbReference type="InterPro" id="IPR029058">
    <property type="entry name" value="AB_hydrolase_fold"/>
</dbReference>
<dbReference type="InterPro" id="IPR050266">
    <property type="entry name" value="AB_hydrolase_sf"/>
</dbReference>
<dbReference type="InterPro" id="IPR010076">
    <property type="entry name" value="BioH"/>
</dbReference>
<dbReference type="PANTHER" id="PTHR43798:SF31">
    <property type="entry name" value="AB HYDROLASE SUPERFAMILY PROTEIN YCLE"/>
    <property type="match status" value="1"/>
</dbReference>
<dbReference type="PANTHER" id="PTHR43798">
    <property type="entry name" value="MONOACYLGLYCEROL LIPASE"/>
    <property type="match status" value="1"/>
</dbReference>
<dbReference type="Pfam" id="PF00561">
    <property type="entry name" value="Abhydrolase_1"/>
    <property type="match status" value="1"/>
</dbReference>
<dbReference type="SUPFAM" id="SSF53474">
    <property type="entry name" value="alpha/beta-Hydrolases"/>
    <property type="match status" value="1"/>
</dbReference>
<sequence>MNIHLDKHGQGMPLVLFHGWGFDNQIWQPIIPYLKPKYQIILVDLPGFGLTPMMDWESFKKNLLDQLPDKFALAGWSMGGLYATRLAIEEPARVQYLINITSSPRFISDIDWPGVAEEVFVNFYNNLSKDINKTLKEFISLQLNKMKFDFKIGNPPSPEGLAFGLEILGTWDFREQLKQITIPTVYLFGRLDPITPVKTMAIMEKNYPNFKYVLFNRAAHMPFLSHTDLFITMMDEFIK</sequence>
<comment type="function">
    <text evidence="1">The physiological role of BioH is to remove the methyl group introduced by BioC when the pimeloyl moiety is complete. It allows to synthesize pimeloyl-ACP via the fatty acid synthetic pathway through the hydrolysis of the ester bonds of pimeloyl-ACP esters.</text>
</comment>
<comment type="catalytic activity">
    <reaction evidence="1">
        <text>6-carboxyhexanoyl-[ACP] methyl ester + H2O = 6-carboxyhexanoyl-[ACP] + methanol + H(+)</text>
        <dbReference type="Rhea" id="RHEA:42700"/>
        <dbReference type="Rhea" id="RHEA-COMP:9955"/>
        <dbReference type="Rhea" id="RHEA-COMP:10186"/>
        <dbReference type="ChEBI" id="CHEBI:15377"/>
        <dbReference type="ChEBI" id="CHEBI:15378"/>
        <dbReference type="ChEBI" id="CHEBI:17790"/>
        <dbReference type="ChEBI" id="CHEBI:78846"/>
        <dbReference type="ChEBI" id="CHEBI:82735"/>
        <dbReference type="EC" id="3.1.1.85"/>
    </reaction>
</comment>
<comment type="pathway">
    <text evidence="1">Cofactor biosynthesis; biotin biosynthesis.</text>
</comment>
<comment type="subunit">
    <text evidence="1">Monomer.</text>
</comment>
<comment type="subcellular location">
    <subcellularLocation>
        <location evidence="1">Cytoplasm</location>
    </subcellularLocation>
</comment>
<comment type="similarity">
    <text evidence="1">Belongs to the AB hydrolase superfamily. Carboxylesterase BioH family.</text>
</comment>
<gene>
    <name evidence="1" type="primary">bioH</name>
    <name type="ordered locus">lpp1430</name>
</gene>
<organism>
    <name type="scientific">Legionella pneumophila (strain Paris)</name>
    <dbReference type="NCBI Taxonomy" id="297246"/>
    <lineage>
        <taxon>Bacteria</taxon>
        <taxon>Pseudomonadati</taxon>
        <taxon>Pseudomonadota</taxon>
        <taxon>Gammaproteobacteria</taxon>
        <taxon>Legionellales</taxon>
        <taxon>Legionellaceae</taxon>
        <taxon>Legionella</taxon>
    </lineage>
</organism>
<reference key="1">
    <citation type="journal article" date="2004" name="Nat. Genet.">
        <title>Evidence in the Legionella pneumophila genome for exploitation of host cell functions and high genome plasticity.</title>
        <authorList>
            <person name="Cazalet C."/>
            <person name="Rusniok C."/>
            <person name="Brueggemann H."/>
            <person name="Zidane N."/>
            <person name="Magnier A."/>
            <person name="Ma L."/>
            <person name="Tichit M."/>
            <person name="Jarraud S."/>
            <person name="Bouchier C."/>
            <person name="Vandenesch F."/>
            <person name="Kunst F."/>
            <person name="Etienne J."/>
            <person name="Glaser P."/>
            <person name="Buchrieser C."/>
        </authorList>
    </citation>
    <scope>NUCLEOTIDE SEQUENCE [LARGE SCALE GENOMIC DNA]</scope>
    <source>
        <strain>Paris</strain>
    </source>
</reference>
<protein>
    <recommendedName>
        <fullName evidence="1">Pimeloyl-[acyl-carrier protein] methyl ester esterase</fullName>
        <ecNumber evidence="1">3.1.1.85</ecNumber>
    </recommendedName>
    <alternativeName>
        <fullName evidence="1">Biotin synthesis protein BioH</fullName>
    </alternativeName>
    <alternativeName>
        <fullName evidence="1">Carboxylesterase BioH</fullName>
    </alternativeName>
</protein>